<accession>Q3YX01</accession>
<name>NTPPA_SHISS</name>
<proteinExistence type="inferred from homology"/>
<feature type="chain" id="PRO_0000267435" description="dTTP/UTP pyrophosphatase">
    <location>
        <begin position="1"/>
        <end position="197"/>
    </location>
</feature>
<feature type="active site" description="Proton acceptor" evidence="1">
    <location>
        <position position="70"/>
    </location>
</feature>
<feature type="site" description="Important for substrate specificity" evidence="1">
    <location>
        <position position="12"/>
    </location>
</feature>
<feature type="site" description="Important for substrate specificity" evidence="1">
    <location>
        <position position="71"/>
    </location>
</feature>
<feature type="site" description="Important for substrate specificity" evidence="1">
    <location>
        <position position="153"/>
    </location>
</feature>
<dbReference type="EC" id="3.6.1.9" evidence="1"/>
<dbReference type="EMBL" id="CP000038">
    <property type="protein sequence ID" value="AAZ89961.1"/>
    <property type="molecule type" value="Genomic_DNA"/>
</dbReference>
<dbReference type="SMR" id="Q3YX01"/>
<dbReference type="KEGG" id="ssn:SSON_3389"/>
<dbReference type="HOGENOM" id="CLU_040416_2_1_6"/>
<dbReference type="Proteomes" id="UP000002529">
    <property type="component" value="Chromosome"/>
</dbReference>
<dbReference type="GO" id="GO:0005737">
    <property type="term" value="C:cytoplasm"/>
    <property type="evidence" value="ECO:0007669"/>
    <property type="project" value="UniProtKB-SubCell"/>
</dbReference>
<dbReference type="GO" id="GO:0036218">
    <property type="term" value="F:dTTP diphosphatase activity"/>
    <property type="evidence" value="ECO:0007669"/>
    <property type="project" value="RHEA"/>
</dbReference>
<dbReference type="GO" id="GO:0036221">
    <property type="term" value="F:UTP diphosphatase activity"/>
    <property type="evidence" value="ECO:0007669"/>
    <property type="project" value="RHEA"/>
</dbReference>
<dbReference type="GO" id="GO:0009117">
    <property type="term" value="P:nucleotide metabolic process"/>
    <property type="evidence" value="ECO:0007669"/>
    <property type="project" value="UniProtKB-KW"/>
</dbReference>
<dbReference type="CDD" id="cd00555">
    <property type="entry name" value="Maf"/>
    <property type="match status" value="1"/>
</dbReference>
<dbReference type="FunFam" id="3.90.950.10:FF:000004">
    <property type="entry name" value="dTTP/UTP pyrophosphatase"/>
    <property type="match status" value="1"/>
</dbReference>
<dbReference type="Gene3D" id="3.90.950.10">
    <property type="match status" value="1"/>
</dbReference>
<dbReference type="HAMAP" id="MF_00528">
    <property type="entry name" value="Maf"/>
    <property type="match status" value="1"/>
</dbReference>
<dbReference type="InterPro" id="IPR029001">
    <property type="entry name" value="ITPase-like_fam"/>
</dbReference>
<dbReference type="InterPro" id="IPR003697">
    <property type="entry name" value="Maf-like"/>
</dbReference>
<dbReference type="NCBIfam" id="TIGR00172">
    <property type="entry name" value="maf"/>
    <property type="match status" value="1"/>
</dbReference>
<dbReference type="PANTHER" id="PTHR43213">
    <property type="entry name" value="BIFUNCTIONAL DTTP/UTP PYROPHOSPHATASE/METHYLTRANSFERASE PROTEIN-RELATED"/>
    <property type="match status" value="1"/>
</dbReference>
<dbReference type="PANTHER" id="PTHR43213:SF5">
    <property type="entry name" value="BIFUNCTIONAL DTTP_UTP PYROPHOSPHATASE_METHYLTRANSFERASE PROTEIN-RELATED"/>
    <property type="match status" value="1"/>
</dbReference>
<dbReference type="Pfam" id="PF02545">
    <property type="entry name" value="Maf"/>
    <property type="match status" value="1"/>
</dbReference>
<dbReference type="PIRSF" id="PIRSF006305">
    <property type="entry name" value="Maf"/>
    <property type="match status" value="1"/>
</dbReference>
<dbReference type="SUPFAM" id="SSF52972">
    <property type="entry name" value="ITPase-like"/>
    <property type="match status" value="1"/>
</dbReference>
<gene>
    <name type="primary">yceF2</name>
    <name type="ordered locus">SSON_3389</name>
</gene>
<protein>
    <recommendedName>
        <fullName evidence="1">dTTP/UTP pyrophosphatase</fullName>
        <shortName evidence="1">dTTPase/UTPase</shortName>
        <ecNumber evidence="1">3.6.1.9</ecNumber>
    </recommendedName>
    <alternativeName>
        <fullName evidence="1">Nucleoside triphosphate pyrophosphatase</fullName>
    </alternativeName>
    <alternativeName>
        <fullName evidence="1">Nucleotide pyrophosphatase</fullName>
        <shortName evidence="1">Nucleotide PPase</shortName>
    </alternativeName>
</protein>
<sequence>MTSLYLASGSPRRQELLAQLGVTFERIVTGIEEQRQPQESAQQYVVRLAREKAQAGVAQTAQDLPVLGADTIVILNGEVLEKPRDAEHAAQMLRKLSGQTHQVMTAVALADSQHILDCLVVTDVTFRTLTDEDIAGYVASGEPLDKAGAYGIQGLGGCFVRKINGSYHAVVGLPLVETYELLSNFNALREKRDKHDG</sequence>
<organism>
    <name type="scientific">Shigella sonnei (strain Ss046)</name>
    <dbReference type="NCBI Taxonomy" id="300269"/>
    <lineage>
        <taxon>Bacteria</taxon>
        <taxon>Pseudomonadati</taxon>
        <taxon>Pseudomonadota</taxon>
        <taxon>Gammaproteobacteria</taxon>
        <taxon>Enterobacterales</taxon>
        <taxon>Enterobacteriaceae</taxon>
        <taxon>Shigella</taxon>
    </lineage>
</organism>
<evidence type="ECO:0000255" key="1">
    <source>
        <dbReference type="HAMAP-Rule" id="MF_00528"/>
    </source>
</evidence>
<comment type="function">
    <text evidence="1">Nucleoside triphosphate pyrophosphatase that hydrolyzes dTTP and UTP. May have a dual role in cell division arrest and in preventing the incorporation of modified nucleotides into cellular nucleic acids.</text>
</comment>
<comment type="catalytic activity">
    <reaction evidence="1">
        <text>dTTP + H2O = dTMP + diphosphate + H(+)</text>
        <dbReference type="Rhea" id="RHEA:28534"/>
        <dbReference type="ChEBI" id="CHEBI:15377"/>
        <dbReference type="ChEBI" id="CHEBI:15378"/>
        <dbReference type="ChEBI" id="CHEBI:33019"/>
        <dbReference type="ChEBI" id="CHEBI:37568"/>
        <dbReference type="ChEBI" id="CHEBI:63528"/>
        <dbReference type="EC" id="3.6.1.9"/>
    </reaction>
</comment>
<comment type="catalytic activity">
    <reaction evidence="1">
        <text>UTP + H2O = UMP + diphosphate + H(+)</text>
        <dbReference type="Rhea" id="RHEA:29395"/>
        <dbReference type="ChEBI" id="CHEBI:15377"/>
        <dbReference type="ChEBI" id="CHEBI:15378"/>
        <dbReference type="ChEBI" id="CHEBI:33019"/>
        <dbReference type="ChEBI" id="CHEBI:46398"/>
        <dbReference type="ChEBI" id="CHEBI:57865"/>
        <dbReference type="EC" id="3.6.1.9"/>
    </reaction>
</comment>
<comment type="cofactor">
    <cofactor evidence="1">
        <name>a divalent metal cation</name>
        <dbReference type="ChEBI" id="CHEBI:60240"/>
    </cofactor>
</comment>
<comment type="subcellular location">
    <subcellularLocation>
        <location evidence="1">Cytoplasm</location>
    </subcellularLocation>
</comment>
<comment type="similarity">
    <text evidence="1">Belongs to the Maf family. YhdE subfamily.</text>
</comment>
<keyword id="KW-0963">Cytoplasm</keyword>
<keyword id="KW-0378">Hydrolase</keyword>
<keyword id="KW-0546">Nucleotide metabolism</keyword>
<keyword id="KW-1185">Reference proteome</keyword>
<reference key="1">
    <citation type="journal article" date="2005" name="Nucleic Acids Res.">
        <title>Genome dynamics and diversity of Shigella species, the etiologic agents of bacillary dysentery.</title>
        <authorList>
            <person name="Yang F."/>
            <person name="Yang J."/>
            <person name="Zhang X."/>
            <person name="Chen L."/>
            <person name="Jiang Y."/>
            <person name="Yan Y."/>
            <person name="Tang X."/>
            <person name="Wang J."/>
            <person name="Xiong Z."/>
            <person name="Dong J."/>
            <person name="Xue Y."/>
            <person name="Zhu Y."/>
            <person name="Xu X."/>
            <person name="Sun L."/>
            <person name="Chen S."/>
            <person name="Nie H."/>
            <person name="Peng J."/>
            <person name="Xu J."/>
            <person name="Wang Y."/>
            <person name="Yuan Z."/>
            <person name="Wen Y."/>
            <person name="Yao Z."/>
            <person name="Shen Y."/>
            <person name="Qiang B."/>
            <person name="Hou Y."/>
            <person name="Yu J."/>
            <person name="Jin Q."/>
        </authorList>
    </citation>
    <scope>NUCLEOTIDE SEQUENCE [LARGE SCALE GENOMIC DNA]</scope>
    <source>
        <strain>Ss046</strain>
    </source>
</reference>